<name>RL4_STRPS</name>
<organism>
    <name type="scientific">Streptococcus pneumoniae (strain CGSP14)</name>
    <dbReference type="NCBI Taxonomy" id="516950"/>
    <lineage>
        <taxon>Bacteria</taxon>
        <taxon>Bacillati</taxon>
        <taxon>Bacillota</taxon>
        <taxon>Bacilli</taxon>
        <taxon>Lactobacillales</taxon>
        <taxon>Streptococcaceae</taxon>
        <taxon>Streptococcus</taxon>
    </lineage>
</organism>
<sequence>MANVTLFDQTGKEAGQVVLSDAVFGIEPNESVVFDVIISQRASLRQGTHAVKNRSAVSGGGRKPWRQKGTGRARQGSIRSPQWRGGGVVFGPTPRSYGYKLPQKVRRLALKSVYSEKVAENKFVAVDALSFTAPKTAEFAKVLAALSIDSKVLVILEEGNEFAALSARNLPNVKVATATTASVLDIANSDKLLVTQAAISKIEEVLA</sequence>
<accession>B2IS41</accession>
<proteinExistence type="inferred from homology"/>
<keyword id="KW-0687">Ribonucleoprotein</keyword>
<keyword id="KW-0689">Ribosomal protein</keyword>
<keyword id="KW-0694">RNA-binding</keyword>
<keyword id="KW-0699">rRNA-binding</keyword>
<evidence type="ECO:0000255" key="1">
    <source>
        <dbReference type="HAMAP-Rule" id="MF_01328"/>
    </source>
</evidence>
<evidence type="ECO:0000256" key="2">
    <source>
        <dbReference type="SAM" id="MobiDB-lite"/>
    </source>
</evidence>
<evidence type="ECO:0000305" key="3"/>
<protein>
    <recommendedName>
        <fullName evidence="1">Large ribosomal subunit protein uL4</fullName>
    </recommendedName>
    <alternativeName>
        <fullName evidence="3">50S ribosomal protein L4</fullName>
    </alternativeName>
</protein>
<feature type="chain" id="PRO_1000142194" description="Large ribosomal subunit protein uL4">
    <location>
        <begin position="1"/>
        <end position="207"/>
    </location>
</feature>
<feature type="region of interest" description="Disordered" evidence="2">
    <location>
        <begin position="49"/>
        <end position="78"/>
    </location>
</feature>
<gene>
    <name evidence="1" type="primary">rplD</name>
    <name type="ordered locus">SPCG_0219</name>
</gene>
<dbReference type="EMBL" id="CP001033">
    <property type="protein sequence ID" value="ACB89471.1"/>
    <property type="molecule type" value="Genomic_DNA"/>
</dbReference>
<dbReference type="RefSeq" id="WP_000024543.1">
    <property type="nucleotide sequence ID" value="NC_010582.1"/>
</dbReference>
<dbReference type="SMR" id="B2IS41"/>
<dbReference type="GeneID" id="45652308"/>
<dbReference type="KEGG" id="spw:SPCG_0219"/>
<dbReference type="HOGENOM" id="CLU_041575_5_2_9"/>
<dbReference type="GO" id="GO:1990904">
    <property type="term" value="C:ribonucleoprotein complex"/>
    <property type="evidence" value="ECO:0007669"/>
    <property type="project" value="UniProtKB-KW"/>
</dbReference>
<dbReference type="GO" id="GO:0005840">
    <property type="term" value="C:ribosome"/>
    <property type="evidence" value="ECO:0007669"/>
    <property type="project" value="UniProtKB-KW"/>
</dbReference>
<dbReference type="GO" id="GO:0019843">
    <property type="term" value="F:rRNA binding"/>
    <property type="evidence" value="ECO:0007669"/>
    <property type="project" value="UniProtKB-UniRule"/>
</dbReference>
<dbReference type="GO" id="GO:0003735">
    <property type="term" value="F:structural constituent of ribosome"/>
    <property type="evidence" value="ECO:0007669"/>
    <property type="project" value="InterPro"/>
</dbReference>
<dbReference type="GO" id="GO:0006412">
    <property type="term" value="P:translation"/>
    <property type="evidence" value="ECO:0007669"/>
    <property type="project" value="UniProtKB-UniRule"/>
</dbReference>
<dbReference type="FunFam" id="3.40.1370.10:FF:000003">
    <property type="entry name" value="50S ribosomal protein L4"/>
    <property type="match status" value="1"/>
</dbReference>
<dbReference type="Gene3D" id="3.40.1370.10">
    <property type="match status" value="1"/>
</dbReference>
<dbReference type="HAMAP" id="MF_01328_B">
    <property type="entry name" value="Ribosomal_uL4_B"/>
    <property type="match status" value="1"/>
</dbReference>
<dbReference type="InterPro" id="IPR002136">
    <property type="entry name" value="Ribosomal_uL4"/>
</dbReference>
<dbReference type="InterPro" id="IPR013005">
    <property type="entry name" value="Ribosomal_uL4-like"/>
</dbReference>
<dbReference type="InterPro" id="IPR023574">
    <property type="entry name" value="Ribosomal_uL4_dom_sf"/>
</dbReference>
<dbReference type="NCBIfam" id="TIGR03953">
    <property type="entry name" value="rplD_bact"/>
    <property type="match status" value="1"/>
</dbReference>
<dbReference type="PANTHER" id="PTHR10746">
    <property type="entry name" value="50S RIBOSOMAL PROTEIN L4"/>
    <property type="match status" value="1"/>
</dbReference>
<dbReference type="PANTHER" id="PTHR10746:SF6">
    <property type="entry name" value="LARGE RIBOSOMAL SUBUNIT PROTEIN UL4M"/>
    <property type="match status" value="1"/>
</dbReference>
<dbReference type="Pfam" id="PF00573">
    <property type="entry name" value="Ribosomal_L4"/>
    <property type="match status" value="1"/>
</dbReference>
<dbReference type="SUPFAM" id="SSF52166">
    <property type="entry name" value="Ribosomal protein L4"/>
    <property type="match status" value="1"/>
</dbReference>
<reference key="1">
    <citation type="journal article" date="2009" name="BMC Genomics">
        <title>Genome evolution driven by host adaptations results in a more virulent and antimicrobial-resistant Streptococcus pneumoniae serotype 14.</title>
        <authorList>
            <person name="Ding F."/>
            <person name="Tang P."/>
            <person name="Hsu M.-H."/>
            <person name="Cui P."/>
            <person name="Hu S."/>
            <person name="Yu J."/>
            <person name="Chiu C.-H."/>
        </authorList>
    </citation>
    <scope>NUCLEOTIDE SEQUENCE [LARGE SCALE GENOMIC DNA]</scope>
    <source>
        <strain>CGSP14</strain>
    </source>
</reference>
<comment type="function">
    <text evidence="1">One of the primary rRNA binding proteins, this protein initially binds near the 5'-end of the 23S rRNA. It is important during the early stages of 50S assembly. It makes multiple contacts with different domains of the 23S rRNA in the assembled 50S subunit and ribosome.</text>
</comment>
<comment type="function">
    <text evidence="1">Forms part of the polypeptide exit tunnel.</text>
</comment>
<comment type="subunit">
    <text evidence="1">Part of the 50S ribosomal subunit.</text>
</comment>
<comment type="similarity">
    <text evidence="1">Belongs to the universal ribosomal protein uL4 family.</text>
</comment>